<name>GRPE_HELPJ</name>
<protein>
    <recommendedName>
        <fullName evidence="1">Protein GrpE</fullName>
    </recommendedName>
    <alternativeName>
        <fullName evidence="1">HSP-70 cofactor</fullName>
    </alternativeName>
</protein>
<dbReference type="EMBL" id="AE001439">
    <property type="protein sequence ID" value="AAD05681.1"/>
    <property type="molecule type" value="Genomic_DNA"/>
</dbReference>
<dbReference type="PIR" id="H71973">
    <property type="entry name" value="H71973"/>
</dbReference>
<dbReference type="RefSeq" id="WP_000650822.1">
    <property type="nucleotide sequence ID" value="NC_000921.1"/>
</dbReference>
<dbReference type="SMR" id="Q9ZMW3"/>
<dbReference type="KEGG" id="hpj:jhp_0102"/>
<dbReference type="PATRIC" id="fig|85963.30.peg.926"/>
<dbReference type="eggNOG" id="COG0576">
    <property type="taxonomic scope" value="Bacteria"/>
</dbReference>
<dbReference type="Proteomes" id="UP000000804">
    <property type="component" value="Chromosome"/>
</dbReference>
<dbReference type="GO" id="GO:0005829">
    <property type="term" value="C:cytosol"/>
    <property type="evidence" value="ECO:0007669"/>
    <property type="project" value="TreeGrafter"/>
</dbReference>
<dbReference type="GO" id="GO:0000774">
    <property type="term" value="F:adenyl-nucleotide exchange factor activity"/>
    <property type="evidence" value="ECO:0007669"/>
    <property type="project" value="InterPro"/>
</dbReference>
<dbReference type="GO" id="GO:0042803">
    <property type="term" value="F:protein homodimerization activity"/>
    <property type="evidence" value="ECO:0007669"/>
    <property type="project" value="InterPro"/>
</dbReference>
<dbReference type="GO" id="GO:0051087">
    <property type="term" value="F:protein-folding chaperone binding"/>
    <property type="evidence" value="ECO:0007669"/>
    <property type="project" value="InterPro"/>
</dbReference>
<dbReference type="GO" id="GO:0051082">
    <property type="term" value="F:unfolded protein binding"/>
    <property type="evidence" value="ECO:0007669"/>
    <property type="project" value="TreeGrafter"/>
</dbReference>
<dbReference type="GO" id="GO:0006457">
    <property type="term" value="P:protein folding"/>
    <property type="evidence" value="ECO:0007669"/>
    <property type="project" value="InterPro"/>
</dbReference>
<dbReference type="CDD" id="cd00446">
    <property type="entry name" value="GrpE"/>
    <property type="match status" value="1"/>
</dbReference>
<dbReference type="FunFam" id="2.30.22.10:FF:000001">
    <property type="entry name" value="Protein GrpE"/>
    <property type="match status" value="1"/>
</dbReference>
<dbReference type="Gene3D" id="3.90.20.20">
    <property type="match status" value="1"/>
</dbReference>
<dbReference type="Gene3D" id="2.30.22.10">
    <property type="entry name" value="Head domain of nucleotide exchange factor GrpE"/>
    <property type="match status" value="1"/>
</dbReference>
<dbReference type="HAMAP" id="MF_01151">
    <property type="entry name" value="GrpE"/>
    <property type="match status" value="1"/>
</dbReference>
<dbReference type="InterPro" id="IPR000740">
    <property type="entry name" value="GrpE"/>
</dbReference>
<dbReference type="InterPro" id="IPR013805">
    <property type="entry name" value="GrpE_coiled_coil"/>
</dbReference>
<dbReference type="InterPro" id="IPR009012">
    <property type="entry name" value="GrpE_head"/>
</dbReference>
<dbReference type="NCBIfam" id="NF010738">
    <property type="entry name" value="PRK14140.1"/>
    <property type="match status" value="1"/>
</dbReference>
<dbReference type="NCBIfam" id="NF010747">
    <property type="entry name" value="PRK14149.1"/>
    <property type="match status" value="1"/>
</dbReference>
<dbReference type="PANTHER" id="PTHR21237">
    <property type="entry name" value="GRPE PROTEIN"/>
    <property type="match status" value="1"/>
</dbReference>
<dbReference type="PANTHER" id="PTHR21237:SF23">
    <property type="entry name" value="GRPE PROTEIN HOMOLOG, MITOCHONDRIAL"/>
    <property type="match status" value="1"/>
</dbReference>
<dbReference type="Pfam" id="PF01025">
    <property type="entry name" value="GrpE"/>
    <property type="match status" value="1"/>
</dbReference>
<dbReference type="PRINTS" id="PR00773">
    <property type="entry name" value="GRPEPROTEIN"/>
</dbReference>
<dbReference type="SUPFAM" id="SSF58014">
    <property type="entry name" value="Coiled-coil domain of nucleotide exchange factor GrpE"/>
    <property type="match status" value="1"/>
</dbReference>
<dbReference type="SUPFAM" id="SSF51064">
    <property type="entry name" value="Head domain of nucleotide exchange factor GrpE"/>
    <property type="match status" value="1"/>
</dbReference>
<dbReference type="PROSITE" id="PS01071">
    <property type="entry name" value="GRPE"/>
    <property type="match status" value="1"/>
</dbReference>
<proteinExistence type="inferred from homology"/>
<evidence type="ECO:0000255" key="1">
    <source>
        <dbReference type="HAMAP-Rule" id="MF_01151"/>
    </source>
</evidence>
<evidence type="ECO:0000256" key="2">
    <source>
        <dbReference type="SAM" id="MobiDB-lite"/>
    </source>
</evidence>
<sequence>MKDEHNQEHDHLSPKEPESYQKAYACKEQQGEEKQEASEKEGEIKEDFELKYQEMREQYLRVHADFENVKKRLERDKSMALEYAYEKIALDLLPVIDALLGAHKSAVEVDKESALTKGLELTMEKLHEVLARHGIEGIECLEEFDPNFHNAIMQVKSEEKENGKIVQVLQQGYKYKGRVLRPAMVSIAKND</sequence>
<organism>
    <name type="scientific">Helicobacter pylori (strain J99 / ATCC 700824)</name>
    <name type="common">Campylobacter pylori J99</name>
    <dbReference type="NCBI Taxonomy" id="85963"/>
    <lineage>
        <taxon>Bacteria</taxon>
        <taxon>Pseudomonadati</taxon>
        <taxon>Campylobacterota</taxon>
        <taxon>Epsilonproteobacteria</taxon>
        <taxon>Campylobacterales</taxon>
        <taxon>Helicobacteraceae</taxon>
        <taxon>Helicobacter</taxon>
    </lineage>
</organism>
<comment type="function">
    <text evidence="1">Participates actively in the response to hyperosmotic and heat shock by preventing the aggregation of stress-denatured proteins, in association with DnaK and GrpE. It is the nucleotide exchange factor for DnaK and may function as a thermosensor. Unfolded proteins bind initially to DnaJ; upon interaction with the DnaJ-bound protein, DnaK hydrolyzes its bound ATP, resulting in the formation of a stable complex. GrpE releases ADP from DnaK; ATP binding to DnaK triggers the release of the substrate protein, thus completing the reaction cycle. Several rounds of ATP-dependent interactions between DnaJ, DnaK and GrpE are required for fully efficient folding.</text>
</comment>
<comment type="subunit">
    <text evidence="1">Homodimer.</text>
</comment>
<comment type="subcellular location">
    <subcellularLocation>
        <location evidence="1">Cytoplasm</location>
    </subcellularLocation>
</comment>
<comment type="similarity">
    <text evidence="1">Belongs to the GrpE family.</text>
</comment>
<reference key="1">
    <citation type="journal article" date="1999" name="Nature">
        <title>Genomic sequence comparison of two unrelated isolates of the human gastric pathogen Helicobacter pylori.</title>
        <authorList>
            <person name="Alm R.A."/>
            <person name="Ling L.-S.L."/>
            <person name="Moir D.T."/>
            <person name="King B.L."/>
            <person name="Brown E.D."/>
            <person name="Doig P.C."/>
            <person name="Smith D.R."/>
            <person name="Noonan B."/>
            <person name="Guild B.C."/>
            <person name="deJonge B.L."/>
            <person name="Carmel G."/>
            <person name="Tummino P.J."/>
            <person name="Caruso A."/>
            <person name="Uria-Nickelsen M."/>
            <person name="Mills D.M."/>
            <person name="Ives C."/>
            <person name="Gibson R."/>
            <person name="Merberg D."/>
            <person name="Mills S.D."/>
            <person name="Jiang Q."/>
            <person name="Taylor D.E."/>
            <person name="Vovis G.F."/>
            <person name="Trust T.J."/>
        </authorList>
    </citation>
    <scope>NUCLEOTIDE SEQUENCE [LARGE SCALE GENOMIC DNA]</scope>
    <source>
        <strain>J99 / ATCC 700824</strain>
    </source>
</reference>
<accession>Q9ZMW3</accession>
<gene>
    <name evidence="1" type="primary">grpE</name>
    <name type="ordered locus">jhp_0102</name>
</gene>
<feature type="chain" id="PRO_0000113796" description="Protein GrpE">
    <location>
        <begin position="1"/>
        <end position="191"/>
    </location>
</feature>
<feature type="region of interest" description="Disordered" evidence="2">
    <location>
        <begin position="1"/>
        <end position="45"/>
    </location>
</feature>
<feature type="compositionally biased region" description="Basic and acidic residues" evidence="2">
    <location>
        <begin position="1"/>
        <end position="19"/>
    </location>
</feature>
<feature type="compositionally biased region" description="Basic and acidic residues" evidence="2">
    <location>
        <begin position="29"/>
        <end position="45"/>
    </location>
</feature>
<keyword id="KW-0143">Chaperone</keyword>
<keyword id="KW-0963">Cytoplasm</keyword>
<keyword id="KW-0346">Stress response</keyword>